<feature type="signal peptide" evidence="1">
    <location>
        <begin position="1"/>
        <end position="18"/>
    </location>
</feature>
<feature type="chain" id="PRO_0000013815" description="Uncharacterized lipoprotein YbjP">
    <location>
        <begin position="19"/>
        <end position="171"/>
    </location>
</feature>
<feature type="lipid moiety-binding region" description="N-palmitoyl cysteine" evidence="1">
    <location>
        <position position="19"/>
    </location>
</feature>
<feature type="lipid moiety-binding region" description="S-diacylglycerol cysteine" evidence="1">
    <location>
        <position position="19"/>
    </location>
</feature>
<keyword id="KW-1003">Cell membrane</keyword>
<keyword id="KW-0449">Lipoprotein</keyword>
<keyword id="KW-0472">Membrane</keyword>
<keyword id="KW-0564">Palmitate</keyword>
<keyword id="KW-1185">Reference proteome</keyword>
<keyword id="KW-0732">Signal</keyword>
<comment type="subcellular location">
    <subcellularLocation>
        <location evidence="2">Cell membrane</location>
        <topology evidence="2">Lipid-anchor</topology>
    </subcellularLocation>
</comment>
<gene>
    <name type="primary">ybjP</name>
    <name type="ordered locus">b0865</name>
    <name type="ordered locus">JW0849</name>
</gene>
<reference key="1">
    <citation type="journal article" date="1996" name="DNA Res.">
        <title>A 718-kb DNA sequence of the Escherichia coli K-12 genome corresponding to the 12.7-28.0 min region on the linkage map.</title>
        <authorList>
            <person name="Oshima T."/>
            <person name="Aiba H."/>
            <person name="Baba T."/>
            <person name="Fujita K."/>
            <person name="Hayashi K."/>
            <person name="Honjo A."/>
            <person name="Ikemoto K."/>
            <person name="Inada T."/>
            <person name="Itoh T."/>
            <person name="Kajihara M."/>
            <person name="Kanai K."/>
            <person name="Kashimoto K."/>
            <person name="Kimura S."/>
            <person name="Kitagawa M."/>
            <person name="Makino K."/>
            <person name="Masuda S."/>
            <person name="Miki T."/>
            <person name="Mizobuchi K."/>
            <person name="Mori H."/>
            <person name="Motomura K."/>
            <person name="Nakamura Y."/>
            <person name="Nashimoto H."/>
            <person name="Nishio Y."/>
            <person name="Saito N."/>
            <person name="Sampei G."/>
            <person name="Seki Y."/>
            <person name="Tagami H."/>
            <person name="Takemoto K."/>
            <person name="Wada C."/>
            <person name="Yamamoto Y."/>
            <person name="Yano M."/>
            <person name="Horiuchi T."/>
        </authorList>
    </citation>
    <scope>NUCLEOTIDE SEQUENCE [LARGE SCALE GENOMIC DNA]</scope>
    <source>
        <strain>K12 / W3110 / ATCC 27325 / DSM 5911</strain>
    </source>
</reference>
<reference key="2">
    <citation type="journal article" date="1997" name="Science">
        <title>The complete genome sequence of Escherichia coli K-12.</title>
        <authorList>
            <person name="Blattner F.R."/>
            <person name="Plunkett G. III"/>
            <person name="Bloch C.A."/>
            <person name="Perna N.T."/>
            <person name="Burland V."/>
            <person name="Riley M."/>
            <person name="Collado-Vides J."/>
            <person name="Glasner J.D."/>
            <person name="Rode C.K."/>
            <person name="Mayhew G.F."/>
            <person name="Gregor J."/>
            <person name="Davis N.W."/>
            <person name="Kirkpatrick H.A."/>
            <person name="Goeden M.A."/>
            <person name="Rose D.J."/>
            <person name="Mau B."/>
            <person name="Shao Y."/>
        </authorList>
    </citation>
    <scope>NUCLEOTIDE SEQUENCE [LARGE SCALE GENOMIC DNA]</scope>
    <source>
        <strain>K12 / MG1655 / ATCC 47076</strain>
    </source>
</reference>
<reference key="3">
    <citation type="journal article" date="2006" name="Mol. Syst. Biol.">
        <title>Highly accurate genome sequences of Escherichia coli K-12 strains MG1655 and W3110.</title>
        <authorList>
            <person name="Hayashi K."/>
            <person name="Morooka N."/>
            <person name="Yamamoto Y."/>
            <person name="Fujita K."/>
            <person name="Isono K."/>
            <person name="Choi S."/>
            <person name="Ohtsubo E."/>
            <person name="Baba T."/>
            <person name="Wanner B.L."/>
            <person name="Mori H."/>
            <person name="Horiuchi T."/>
        </authorList>
    </citation>
    <scope>NUCLEOTIDE SEQUENCE [LARGE SCALE GENOMIC DNA]</scope>
    <source>
        <strain>K12 / W3110 / ATCC 27325 / DSM 5911</strain>
    </source>
</reference>
<reference key="4">
    <citation type="journal article" date="2000" name="Eur. J. Biochem.">
        <title>Proteomic analysis of the Escherichia coli outer membrane.</title>
        <authorList>
            <person name="Molloy M.P."/>
            <person name="Herbert B.R."/>
            <person name="Slade M.B."/>
            <person name="Rabilloud T."/>
            <person name="Nouwens A.S."/>
            <person name="Williams K.L."/>
            <person name="Gooley A.A."/>
        </authorList>
    </citation>
    <scope>IDENTIFICATION BY MASS SPECTROMETRY</scope>
</reference>
<organism>
    <name type="scientific">Escherichia coli (strain K12)</name>
    <dbReference type="NCBI Taxonomy" id="83333"/>
    <lineage>
        <taxon>Bacteria</taxon>
        <taxon>Pseudomonadati</taxon>
        <taxon>Pseudomonadota</taxon>
        <taxon>Gammaproteobacteria</taxon>
        <taxon>Enterobacterales</taxon>
        <taxon>Enterobacteriaceae</taxon>
        <taxon>Escherichia</taxon>
    </lineage>
</organism>
<dbReference type="EMBL" id="U00096">
    <property type="protein sequence ID" value="AAC73952.1"/>
    <property type="molecule type" value="Genomic_DNA"/>
</dbReference>
<dbReference type="EMBL" id="AP009048">
    <property type="protein sequence ID" value="BAA35579.1"/>
    <property type="molecule type" value="Genomic_DNA"/>
</dbReference>
<dbReference type="PIR" id="A64825">
    <property type="entry name" value="A64825"/>
</dbReference>
<dbReference type="RefSeq" id="NP_415386.1">
    <property type="nucleotide sequence ID" value="NC_000913.3"/>
</dbReference>
<dbReference type="RefSeq" id="WP_001270734.1">
    <property type="nucleotide sequence ID" value="NZ_SSZK01000002.1"/>
</dbReference>
<dbReference type="BioGRID" id="4263134">
    <property type="interactions" value="126"/>
</dbReference>
<dbReference type="FunCoup" id="P75818">
    <property type="interactions" value="47"/>
</dbReference>
<dbReference type="IntAct" id="P75818">
    <property type="interactions" value="2"/>
</dbReference>
<dbReference type="STRING" id="511145.b0865"/>
<dbReference type="jPOST" id="P75818"/>
<dbReference type="PaxDb" id="511145-b0865"/>
<dbReference type="DNASU" id="945491"/>
<dbReference type="EnsemblBacteria" id="AAC73952">
    <property type="protein sequence ID" value="AAC73952"/>
    <property type="gene ID" value="b0865"/>
</dbReference>
<dbReference type="GeneID" id="945491"/>
<dbReference type="KEGG" id="ecj:JW0849"/>
<dbReference type="KEGG" id="eco:b0865"/>
<dbReference type="KEGG" id="ecoc:C3026_05385"/>
<dbReference type="PATRIC" id="fig|1411691.4.peg.1412"/>
<dbReference type="EchoBASE" id="EB3449"/>
<dbReference type="eggNOG" id="ENOG502ZYT8">
    <property type="taxonomic scope" value="Bacteria"/>
</dbReference>
<dbReference type="HOGENOM" id="CLU_126623_0_0_6"/>
<dbReference type="InParanoid" id="P75818"/>
<dbReference type="OMA" id="CWVVDDV"/>
<dbReference type="OrthoDB" id="6076941at2"/>
<dbReference type="PhylomeDB" id="P75818"/>
<dbReference type="BioCyc" id="EcoCyc:G6450-MONOMER"/>
<dbReference type="PRO" id="PR:P75818"/>
<dbReference type="Proteomes" id="UP000000625">
    <property type="component" value="Chromosome"/>
</dbReference>
<dbReference type="GO" id="GO:0005886">
    <property type="term" value="C:plasma membrane"/>
    <property type="evidence" value="ECO:0007669"/>
    <property type="project" value="UniProtKB-SubCell"/>
</dbReference>
<dbReference type="InterPro" id="IPR024289">
    <property type="entry name" value="DUF3828"/>
</dbReference>
<dbReference type="NCBIfam" id="NF007824">
    <property type="entry name" value="PRK10533.1"/>
    <property type="match status" value="1"/>
</dbReference>
<dbReference type="Pfam" id="PF12883">
    <property type="entry name" value="DUF3828"/>
    <property type="match status" value="1"/>
</dbReference>
<dbReference type="PROSITE" id="PS51257">
    <property type="entry name" value="PROKAR_LIPOPROTEIN"/>
    <property type="match status" value="1"/>
</dbReference>
<protein>
    <recommendedName>
        <fullName>Uncharacterized lipoprotein YbjP</fullName>
    </recommendedName>
</protein>
<sequence>MRYSKLTMLIPCALLLSACTTVTPAYKDNGTRSGPCVEGGPDNVAQQFYDYRILHRSNDITALRPYLSDKLATLLSDASRDNNHRELLTNDPFSSRTTLPDSAHVASASTIPNRDARNIPLRVDLKQGDQGWQDEVLMIQEGQCWVIDDVRYLGGSVHATAGTLRQSIENR</sequence>
<proteinExistence type="evidence at protein level"/>
<accession>P75818</accession>
<name>YBJP_ECOLI</name>
<evidence type="ECO:0000255" key="1">
    <source>
        <dbReference type="PROSITE-ProRule" id="PRU00303"/>
    </source>
</evidence>
<evidence type="ECO:0000305" key="2"/>